<reference key="1">
    <citation type="journal article" date="1980" name="Nature">
        <title>Two types of somatic recombination are necessary for the generation of complete immunoglobulin heavy-chain genes.</title>
        <authorList>
            <person name="Sakano H."/>
            <person name="Maki R."/>
            <person name="Kurosawa Y."/>
            <person name="Roeder W."/>
            <person name="Tonegawa S."/>
        </authorList>
    </citation>
    <scope>NUCLEOTIDE SEQUENCE [GENOMIC DNA]</scope>
</reference>
<protein>
    <recommendedName>
        <fullName>Ig heavy chain V region PJ14</fullName>
    </recommendedName>
</protein>
<proteinExistence type="evidence at protein level"/>
<accession>P01820</accession>
<sequence length="115" mass="12447">MAVLALLFCLVTFPSCILSQVQLKESGPGLVAPSQSLSITCTVSGFSLTGYGVNWVRQPPGKGLEWLGMIWGDGSTDYNSALKSRLSISKDNSKSQVFLKMNSLQTDDTARYYCA</sequence>
<feature type="signal peptide">
    <location>
        <begin position="1"/>
        <end position="19"/>
    </location>
</feature>
<feature type="chain" id="PRO_0000015230" description="Ig heavy chain V region PJ14">
    <location>
        <begin position="20"/>
        <end position="115"/>
    </location>
</feature>
<feature type="domain" description="Ig-like">
    <location>
        <begin position="20"/>
        <end position="115" status="greater than"/>
    </location>
</feature>
<feature type="non-terminal residue">
    <location>
        <position position="115"/>
    </location>
</feature>
<feature type="strand" evidence="1">
    <location>
        <begin position="22"/>
        <end position="26"/>
    </location>
</feature>
<feature type="strand" evidence="1">
    <location>
        <begin position="29"/>
        <end position="31"/>
    </location>
</feature>
<feature type="strand" evidence="1">
    <location>
        <begin position="37"/>
        <end position="46"/>
    </location>
</feature>
<feature type="strand" evidence="1">
    <location>
        <begin position="50"/>
        <end position="58"/>
    </location>
</feature>
<feature type="turn" evidence="2">
    <location>
        <begin position="60"/>
        <end position="62"/>
    </location>
</feature>
<feature type="strand" evidence="1">
    <location>
        <begin position="65"/>
        <end position="70"/>
    </location>
</feature>
<feature type="strand" evidence="2">
    <location>
        <begin position="72"/>
        <end position="74"/>
    </location>
</feature>
<feature type="strand" evidence="1">
    <location>
        <begin position="76"/>
        <end position="78"/>
    </location>
</feature>
<feature type="turn" evidence="1">
    <location>
        <begin position="80"/>
        <end position="82"/>
    </location>
</feature>
<feature type="helix" evidence="1">
    <location>
        <begin position="83"/>
        <end position="85"/>
    </location>
</feature>
<feature type="strand" evidence="1">
    <location>
        <begin position="86"/>
        <end position="91"/>
    </location>
</feature>
<feature type="helix" evidence="1">
    <location>
        <begin position="92"/>
        <end position="94"/>
    </location>
</feature>
<feature type="strand" evidence="1">
    <location>
        <begin position="96"/>
        <end position="101"/>
    </location>
</feature>
<feature type="helix" evidence="1">
    <location>
        <begin position="106"/>
        <end position="108"/>
    </location>
</feature>
<feature type="strand" evidence="1">
    <location>
        <begin position="110"/>
        <end position="115"/>
    </location>
</feature>
<dbReference type="EMBL" id="V00767">
    <property type="protein sequence ID" value="CAA24148.1"/>
    <property type="molecule type" value="Genomic_DNA"/>
</dbReference>
<dbReference type="PIR" id="A02095">
    <property type="entry name" value="HVMS14"/>
</dbReference>
<dbReference type="PDB" id="1A2Y">
    <property type="method" value="X-ray"/>
    <property type="resolution" value="1.50 A"/>
    <property type="chains" value="B=20-115"/>
</dbReference>
<dbReference type="PDB" id="1A7N">
    <property type="method" value="X-ray"/>
    <property type="resolution" value="2.01 A"/>
    <property type="chains" value="H=20-115"/>
</dbReference>
<dbReference type="PDB" id="1A7O">
    <property type="method" value="X-ray"/>
    <property type="resolution" value="2.00 A"/>
    <property type="chains" value="H=20-115"/>
</dbReference>
<dbReference type="PDB" id="1A7P">
    <property type="method" value="X-ray"/>
    <property type="resolution" value="2.01 A"/>
    <property type="chains" value="H=20-115"/>
</dbReference>
<dbReference type="PDB" id="1A7Q">
    <property type="method" value="X-ray"/>
    <property type="resolution" value="2.00 A"/>
    <property type="chains" value="H=20-115"/>
</dbReference>
<dbReference type="PDB" id="1A7R">
    <property type="method" value="X-ray"/>
    <property type="resolution" value="2.01 A"/>
    <property type="chains" value="H=20-115"/>
</dbReference>
<dbReference type="PDB" id="1DL7">
    <property type="method" value="X-ray"/>
    <property type="resolution" value="2.35 A"/>
    <property type="chains" value="H=20-115"/>
</dbReference>
<dbReference type="PDB" id="1DVF">
    <property type="method" value="X-ray"/>
    <property type="resolution" value="1.90 A"/>
    <property type="chains" value="B=20-115"/>
</dbReference>
<dbReference type="PDB" id="1G7H">
    <property type="method" value="X-ray"/>
    <property type="resolution" value="1.85 A"/>
    <property type="chains" value="B=20-115"/>
</dbReference>
<dbReference type="PDB" id="1G7I">
    <property type="method" value="X-ray"/>
    <property type="resolution" value="1.80 A"/>
    <property type="chains" value="B=20-115"/>
</dbReference>
<dbReference type="PDB" id="1G7J">
    <property type="method" value="X-ray"/>
    <property type="resolution" value="1.75 A"/>
    <property type="chains" value="B=20-115"/>
</dbReference>
<dbReference type="PDB" id="1G7L">
    <property type="method" value="X-ray"/>
    <property type="resolution" value="2.00 A"/>
    <property type="chains" value="B=20-115"/>
</dbReference>
<dbReference type="PDB" id="1G7M">
    <property type="method" value="X-ray"/>
    <property type="resolution" value="1.90 A"/>
    <property type="chains" value="B=20-115"/>
</dbReference>
<dbReference type="PDB" id="1KIR">
    <property type="method" value="X-ray"/>
    <property type="resolution" value="2.00 A"/>
    <property type="chains" value="B=20-115"/>
</dbReference>
<dbReference type="PDB" id="1P4B">
    <property type="method" value="X-ray"/>
    <property type="resolution" value="2.35 A"/>
    <property type="chains" value="H=21-114"/>
</dbReference>
<dbReference type="PDB" id="1P4I">
    <property type="method" value="X-ray"/>
    <property type="resolution" value="2.80 A"/>
    <property type="chains" value="H=21-114"/>
</dbReference>
<dbReference type="PDB" id="1VFA">
    <property type="method" value="X-ray"/>
    <property type="resolution" value="1.80 A"/>
    <property type="chains" value="B=20-115"/>
</dbReference>
<dbReference type="PDB" id="1VFB">
    <property type="method" value="X-ray"/>
    <property type="resolution" value="1.80 A"/>
    <property type="chains" value="B=20-115"/>
</dbReference>
<dbReference type="PDB" id="43C9">
    <property type="method" value="X-ray"/>
    <property type="resolution" value="2.20 A"/>
    <property type="chains" value="B/D/F/H=20-114"/>
</dbReference>
<dbReference type="PDB" id="43CA">
    <property type="method" value="X-ray"/>
    <property type="resolution" value="2.30 A"/>
    <property type="chains" value="B/D/F/H=20-114"/>
</dbReference>
<dbReference type="PDBsum" id="1A2Y"/>
<dbReference type="PDBsum" id="1A7N"/>
<dbReference type="PDBsum" id="1A7O"/>
<dbReference type="PDBsum" id="1A7P"/>
<dbReference type="PDBsum" id="1A7Q"/>
<dbReference type="PDBsum" id="1A7R"/>
<dbReference type="PDBsum" id="1DL7"/>
<dbReference type="PDBsum" id="1DVF"/>
<dbReference type="PDBsum" id="1G7H"/>
<dbReference type="PDBsum" id="1G7I"/>
<dbReference type="PDBsum" id="1G7J"/>
<dbReference type="PDBsum" id="1G7L"/>
<dbReference type="PDBsum" id="1G7M"/>
<dbReference type="PDBsum" id="1KIR"/>
<dbReference type="PDBsum" id="1P4B"/>
<dbReference type="PDBsum" id="1P4I"/>
<dbReference type="PDBsum" id="1VFA"/>
<dbReference type="PDBsum" id="1VFB"/>
<dbReference type="PDBsum" id="43C9"/>
<dbReference type="PDBsum" id="43CA"/>
<dbReference type="SMR" id="P01820"/>
<dbReference type="FunCoup" id="P01820">
    <property type="interactions" value="559"/>
</dbReference>
<dbReference type="IntAct" id="P01820">
    <property type="interactions" value="1"/>
</dbReference>
<dbReference type="MINT" id="P01820"/>
<dbReference type="InParanoid" id="P01820"/>
<dbReference type="EvolutionaryTrace" id="P01820"/>
<dbReference type="Proteomes" id="UP000000589">
    <property type="component" value="Unplaced"/>
</dbReference>
<dbReference type="RNAct" id="P01820">
    <property type="molecule type" value="protein"/>
</dbReference>
<dbReference type="GO" id="GO:0005576">
    <property type="term" value="C:extracellular region"/>
    <property type="evidence" value="ECO:0007669"/>
    <property type="project" value="UniProtKB-ARBA"/>
</dbReference>
<dbReference type="GO" id="GO:0019814">
    <property type="term" value="C:immunoglobulin complex"/>
    <property type="evidence" value="ECO:0007669"/>
    <property type="project" value="UniProtKB-KW"/>
</dbReference>
<dbReference type="GO" id="GO:0003823">
    <property type="term" value="F:antigen binding"/>
    <property type="evidence" value="ECO:0000318"/>
    <property type="project" value="GO_Central"/>
</dbReference>
<dbReference type="GO" id="GO:0016064">
    <property type="term" value="P:immunoglobulin mediated immune response"/>
    <property type="evidence" value="ECO:0000318"/>
    <property type="project" value="GO_Central"/>
</dbReference>
<dbReference type="FunFam" id="2.60.40.10:FF:001621">
    <property type="entry name" value="Immunoglobulin heavy variable 2-6-8"/>
    <property type="match status" value="1"/>
</dbReference>
<dbReference type="Gene3D" id="2.60.40.10">
    <property type="entry name" value="Immunoglobulins"/>
    <property type="match status" value="1"/>
</dbReference>
<dbReference type="InterPro" id="IPR007110">
    <property type="entry name" value="Ig-like_dom"/>
</dbReference>
<dbReference type="InterPro" id="IPR036179">
    <property type="entry name" value="Ig-like_dom_sf"/>
</dbReference>
<dbReference type="InterPro" id="IPR013783">
    <property type="entry name" value="Ig-like_fold"/>
</dbReference>
<dbReference type="InterPro" id="IPR013106">
    <property type="entry name" value="Ig_V-set"/>
</dbReference>
<dbReference type="InterPro" id="IPR050199">
    <property type="entry name" value="IgHV"/>
</dbReference>
<dbReference type="PANTHER" id="PTHR23266">
    <property type="entry name" value="IMMUNOGLOBULIN HEAVY CHAIN"/>
    <property type="match status" value="1"/>
</dbReference>
<dbReference type="Pfam" id="PF07686">
    <property type="entry name" value="V-set"/>
    <property type="match status" value="1"/>
</dbReference>
<dbReference type="SMART" id="SM00406">
    <property type="entry name" value="IGv"/>
    <property type="match status" value="1"/>
</dbReference>
<dbReference type="SUPFAM" id="SSF48726">
    <property type="entry name" value="Immunoglobulin"/>
    <property type="match status" value="1"/>
</dbReference>
<dbReference type="PROSITE" id="PS50835">
    <property type="entry name" value="IG_LIKE"/>
    <property type="match status" value="1"/>
</dbReference>
<keyword id="KW-0002">3D-structure</keyword>
<keyword id="KW-1064">Adaptive immunity</keyword>
<keyword id="KW-0391">Immunity</keyword>
<keyword id="KW-1280">Immunoglobulin</keyword>
<keyword id="KW-1185">Reference proteome</keyword>
<keyword id="KW-0732">Signal</keyword>
<name>HVM44_MOUSE</name>
<evidence type="ECO:0007829" key="1">
    <source>
        <dbReference type="PDB" id="1A2Y"/>
    </source>
</evidence>
<evidence type="ECO:0007829" key="2">
    <source>
        <dbReference type="PDB" id="43C9"/>
    </source>
</evidence>
<organism>
    <name type="scientific">Mus musculus</name>
    <name type="common">Mouse</name>
    <dbReference type="NCBI Taxonomy" id="10090"/>
    <lineage>
        <taxon>Eukaryota</taxon>
        <taxon>Metazoa</taxon>
        <taxon>Chordata</taxon>
        <taxon>Craniata</taxon>
        <taxon>Vertebrata</taxon>
        <taxon>Euteleostomi</taxon>
        <taxon>Mammalia</taxon>
        <taxon>Eutheria</taxon>
        <taxon>Euarchontoglires</taxon>
        <taxon>Glires</taxon>
        <taxon>Rodentia</taxon>
        <taxon>Myomorpha</taxon>
        <taxon>Muroidea</taxon>
        <taxon>Muridae</taxon>
        <taxon>Murinae</taxon>
        <taxon>Mus</taxon>
        <taxon>Mus</taxon>
    </lineage>
</organism>